<evidence type="ECO:0000255" key="1">
    <source>
        <dbReference type="HAMAP-Rule" id="MF_01831"/>
    </source>
</evidence>
<feature type="chain" id="PRO_1000188295" description="Cysteine desulfurase">
    <location>
        <begin position="1"/>
        <end position="406"/>
    </location>
</feature>
<feature type="active site" description="Cysteine persulfide intermediate" evidence="1">
    <location>
        <position position="364"/>
    </location>
</feature>
<feature type="modified residue" description="N6-(pyridoxal phosphate)lysine" evidence="1">
    <location>
        <position position="226"/>
    </location>
</feature>
<organism>
    <name type="scientific">Escherichia coli O7:K1 (strain IAI39 / ExPEC)</name>
    <dbReference type="NCBI Taxonomy" id="585057"/>
    <lineage>
        <taxon>Bacteria</taxon>
        <taxon>Pseudomonadati</taxon>
        <taxon>Pseudomonadota</taxon>
        <taxon>Gammaproteobacteria</taxon>
        <taxon>Enterobacterales</taxon>
        <taxon>Enterobacteriaceae</taxon>
        <taxon>Escherichia</taxon>
    </lineage>
</organism>
<accession>B7NTV6</accession>
<protein>
    <recommendedName>
        <fullName evidence="1">Cysteine desulfurase</fullName>
        <ecNumber evidence="1">2.8.1.7</ecNumber>
    </recommendedName>
    <alternativeName>
        <fullName evidence="1">Selenocysteine beta-lyase</fullName>
        <shortName evidence="1">SCL</shortName>
    </alternativeName>
    <alternativeName>
        <fullName evidence="1">Selenocysteine lyase</fullName>
        <ecNumber evidence="1">4.4.1.16</ecNumber>
    </alternativeName>
    <alternativeName>
        <fullName evidence="1">Selenocysteine reductase</fullName>
    </alternativeName>
</protein>
<dbReference type="EC" id="2.8.1.7" evidence="1"/>
<dbReference type="EC" id="4.4.1.16" evidence="1"/>
<dbReference type="EMBL" id="CU928164">
    <property type="protein sequence ID" value="CAR17512.1"/>
    <property type="molecule type" value="Genomic_DNA"/>
</dbReference>
<dbReference type="RefSeq" id="WP_000222529.1">
    <property type="nucleotide sequence ID" value="NC_011750.1"/>
</dbReference>
<dbReference type="RefSeq" id="YP_002407384.1">
    <property type="nucleotide sequence ID" value="NC_011750.1"/>
</dbReference>
<dbReference type="SMR" id="B7NTV6"/>
<dbReference type="STRING" id="585057.ECIAI39_1378"/>
<dbReference type="KEGG" id="ect:ECIAI39_1378"/>
<dbReference type="PATRIC" id="fig|585057.6.peg.1441"/>
<dbReference type="HOGENOM" id="CLU_003433_2_5_6"/>
<dbReference type="UniPathway" id="UPA00266"/>
<dbReference type="Proteomes" id="UP000000749">
    <property type="component" value="Chromosome"/>
</dbReference>
<dbReference type="GO" id="GO:0005737">
    <property type="term" value="C:cytoplasm"/>
    <property type="evidence" value="ECO:0007669"/>
    <property type="project" value="UniProtKB-SubCell"/>
</dbReference>
<dbReference type="GO" id="GO:0031071">
    <property type="term" value="F:cysteine desulfurase activity"/>
    <property type="evidence" value="ECO:0007669"/>
    <property type="project" value="UniProtKB-UniRule"/>
</dbReference>
<dbReference type="GO" id="GO:0030170">
    <property type="term" value="F:pyridoxal phosphate binding"/>
    <property type="evidence" value="ECO:0007669"/>
    <property type="project" value="InterPro"/>
</dbReference>
<dbReference type="GO" id="GO:0009000">
    <property type="term" value="F:selenocysteine lyase activity"/>
    <property type="evidence" value="ECO:0007669"/>
    <property type="project" value="UniProtKB-UniRule"/>
</dbReference>
<dbReference type="GO" id="GO:0006534">
    <property type="term" value="P:cysteine metabolic process"/>
    <property type="evidence" value="ECO:0007669"/>
    <property type="project" value="InterPro"/>
</dbReference>
<dbReference type="CDD" id="cd06453">
    <property type="entry name" value="SufS_like"/>
    <property type="match status" value="1"/>
</dbReference>
<dbReference type="FunFam" id="3.40.640.10:FF:000042">
    <property type="entry name" value="Cysteine desulfurase"/>
    <property type="match status" value="1"/>
</dbReference>
<dbReference type="Gene3D" id="3.90.1150.10">
    <property type="entry name" value="Aspartate Aminotransferase, domain 1"/>
    <property type="match status" value="1"/>
</dbReference>
<dbReference type="Gene3D" id="3.40.640.10">
    <property type="entry name" value="Type I PLP-dependent aspartate aminotransferase-like (Major domain)"/>
    <property type="match status" value="1"/>
</dbReference>
<dbReference type="HAMAP" id="MF_01831">
    <property type="entry name" value="SufS_aminotrans_5"/>
    <property type="match status" value="1"/>
</dbReference>
<dbReference type="InterPro" id="IPR000192">
    <property type="entry name" value="Aminotrans_V_dom"/>
</dbReference>
<dbReference type="InterPro" id="IPR020578">
    <property type="entry name" value="Aminotrans_V_PyrdxlP_BS"/>
</dbReference>
<dbReference type="InterPro" id="IPR010970">
    <property type="entry name" value="Cys_dSase_SufS"/>
</dbReference>
<dbReference type="InterPro" id="IPR015424">
    <property type="entry name" value="PyrdxlP-dep_Trfase"/>
</dbReference>
<dbReference type="InterPro" id="IPR015421">
    <property type="entry name" value="PyrdxlP-dep_Trfase_major"/>
</dbReference>
<dbReference type="InterPro" id="IPR015422">
    <property type="entry name" value="PyrdxlP-dep_Trfase_small"/>
</dbReference>
<dbReference type="NCBIfam" id="NF006791">
    <property type="entry name" value="PRK09295.1"/>
    <property type="match status" value="1"/>
</dbReference>
<dbReference type="NCBIfam" id="TIGR01979">
    <property type="entry name" value="sufS"/>
    <property type="match status" value="1"/>
</dbReference>
<dbReference type="PANTHER" id="PTHR43586">
    <property type="entry name" value="CYSTEINE DESULFURASE"/>
    <property type="match status" value="1"/>
</dbReference>
<dbReference type="PANTHER" id="PTHR43586:SF25">
    <property type="entry name" value="CYSTEINE DESULFURASE"/>
    <property type="match status" value="1"/>
</dbReference>
<dbReference type="Pfam" id="PF00266">
    <property type="entry name" value="Aminotran_5"/>
    <property type="match status" value="1"/>
</dbReference>
<dbReference type="SUPFAM" id="SSF53383">
    <property type="entry name" value="PLP-dependent transferases"/>
    <property type="match status" value="1"/>
</dbReference>
<dbReference type="PROSITE" id="PS00595">
    <property type="entry name" value="AA_TRANSFER_CLASS_5"/>
    <property type="match status" value="1"/>
</dbReference>
<gene>
    <name evidence="1" type="primary">sufS</name>
    <name type="ordered locus">ECIAI39_1378</name>
</gene>
<reference key="1">
    <citation type="journal article" date="2009" name="PLoS Genet.">
        <title>Organised genome dynamics in the Escherichia coli species results in highly diverse adaptive paths.</title>
        <authorList>
            <person name="Touchon M."/>
            <person name="Hoede C."/>
            <person name="Tenaillon O."/>
            <person name="Barbe V."/>
            <person name="Baeriswyl S."/>
            <person name="Bidet P."/>
            <person name="Bingen E."/>
            <person name="Bonacorsi S."/>
            <person name="Bouchier C."/>
            <person name="Bouvet O."/>
            <person name="Calteau A."/>
            <person name="Chiapello H."/>
            <person name="Clermont O."/>
            <person name="Cruveiller S."/>
            <person name="Danchin A."/>
            <person name="Diard M."/>
            <person name="Dossat C."/>
            <person name="Karoui M.E."/>
            <person name="Frapy E."/>
            <person name="Garry L."/>
            <person name="Ghigo J.M."/>
            <person name="Gilles A.M."/>
            <person name="Johnson J."/>
            <person name="Le Bouguenec C."/>
            <person name="Lescat M."/>
            <person name="Mangenot S."/>
            <person name="Martinez-Jehanne V."/>
            <person name="Matic I."/>
            <person name="Nassif X."/>
            <person name="Oztas S."/>
            <person name="Petit M.A."/>
            <person name="Pichon C."/>
            <person name="Rouy Z."/>
            <person name="Ruf C.S."/>
            <person name="Schneider D."/>
            <person name="Tourret J."/>
            <person name="Vacherie B."/>
            <person name="Vallenet D."/>
            <person name="Medigue C."/>
            <person name="Rocha E.P.C."/>
            <person name="Denamur E."/>
        </authorList>
    </citation>
    <scope>NUCLEOTIDE SEQUENCE [LARGE SCALE GENOMIC DNA]</scope>
    <source>
        <strain>IAI39 / ExPEC</strain>
    </source>
</reference>
<proteinExistence type="inferred from homology"/>
<name>SUFS_ECO7I</name>
<sequence>MTYSVDKVRADFPVLSREVNGLPLAYLDSAASAQKPSQVIDAEAEFYRHGYAAVHRGIHTLSAQATEKMESVRKRASLFINARSAEELVFVRGTTEGINLVANSWGNSNVRAGDNIIISQMEHHANIVPWQMLCARVGAELRVIPLNPDGTLQLEMLPNLFDEKTRLLAITHVSNVLGTENPLAEMITLAHQHGAKVLVDGAQAVMHHPVDVQALDCDFYVFSGHKLYGPTGIGILYVKEALLQEMPPWEGGGSMIATVSLSEGTTWTKAPWRFEAGTPNTGGIIGLGAALEYVSALGLNNIAEYEQNLMHYALSQLESVPDLTLYGPQNRLGVIAFNLGKHHAYDVGSFLDNYGIAVRTGHHCAMPLMAYYNVPAMCRASLAMYNTHEEVDRLVTGLQRIHRLLG</sequence>
<comment type="function">
    <text evidence="1">Cysteine desulfurases mobilize the sulfur from L-cysteine to yield L-alanine, an essential step in sulfur metabolism for biosynthesis of a variety of sulfur-containing biomolecules. Component of the suf operon, which is activated and required under specific conditions such as oxidative stress and iron limitation. Acts as a potent selenocysteine lyase in vitro, that mobilizes selenium from L-selenocysteine. Selenocysteine lyase activity is however unsure in vivo.</text>
</comment>
<comment type="catalytic activity">
    <reaction evidence="1">
        <text>(sulfur carrier)-H + L-cysteine = (sulfur carrier)-SH + L-alanine</text>
        <dbReference type="Rhea" id="RHEA:43892"/>
        <dbReference type="Rhea" id="RHEA-COMP:14737"/>
        <dbReference type="Rhea" id="RHEA-COMP:14739"/>
        <dbReference type="ChEBI" id="CHEBI:29917"/>
        <dbReference type="ChEBI" id="CHEBI:35235"/>
        <dbReference type="ChEBI" id="CHEBI:57972"/>
        <dbReference type="ChEBI" id="CHEBI:64428"/>
        <dbReference type="EC" id="2.8.1.7"/>
    </reaction>
</comment>
<comment type="catalytic activity">
    <reaction evidence="1">
        <text>L-selenocysteine + AH2 = hydrogenselenide + L-alanine + A + H(+)</text>
        <dbReference type="Rhea" id="RHEA:11632"/>
        <dbReference type="ChEBI" id="CHEBI:13193"/>
        <dbReference type="ChEBI" id="CHEBI:15378"/>
        <dbReference type="ChEBI" id="CHEBI:17499"/>
        <dbReference type="ChEBI" id="CHEBI:29317"/>
        <dbReference type="ChEBI" id="CHEBI:57843"/>
        <dbReference type="ChEBI" id="CHEBI:57972"/>
        <dbReference type="EC" id="4.4.1.16"/>
    </reaction>
</comment>
<comment type="cofactor">
    <cofactor evidence="1">
        <name>pyridoxal 5'-phosphate</name>
        <dbReference type="ChEBI" id="CHEBI:597326"/>
    </cofactor>
</comment>
<comment type="pathway">
    <text evidence="1">Cofactor biosynthesis; iron-sulfur cluster biosynthesis.</text>
</comment>
<comment type="subunit">
    <text evidence="1">Homodimer. Interacts with SufE and the SufBCD complex composed of SufB, SufC and SufD. The interaction with SufE is required to mediate the direct transfer of the sulfur atom from the S-sulfanylcysteine.</text>
</comment>
<comment type="subcellular location">
    <subcellularLocation>
        <location evidence="1">Cytoplasm</location>
    </subcellularLocation>
</comment>
<comment type="similarity">
    <text evidence="1">Belongs to the class-V pyridoxal-phosphate-dependent aminotransferase family. Csd subfamily.</text>
</comment>
<keyword id="KW-0963">Cytoplasm</keyword>
<keyword id="KW-0456">Lyase</keyword>
<keyword id="KW-0663">Pyridoxal phosphate</keyword>
<keyword id="KW-0808">Transferase</keyword>